<gene>
    <name evidence="1" type="primary">recA</name>
    <name type="ordered locus">RC1_0899</name>
</gene>
<protein>
    <recommendedName>
        <fullName evidence="1">Protein RecA</fullName>
    </recommendedName>
    <alternativeName>
        <fullName evidence="1">Recombinase A</fullName>
    </alternativeName>
</protein>
<accession>B6IS93</accession>
<feature type="chain" id="PRO_1000114359" description="Protein RecA">
    <location>
        <begin position="1"/>
        <end position="358"/>
    </location>
</feature>
<feature type="binding site" evidence="1">
    <location>
        <begin position="76"/>
        <end position="83"/>
    </location>
    <ligand>
        <name>ATP</name>
        <dbReference type="ChEBI" id="CHEBI:30616"/>
    </ligand>
</feature>
<name>RECA_RHOCS</name>
<keyword id="KW-0067">ATP-binding</keyword>
<keyword id="KW-0963">Cytoplasm</keyword>
<keyword id="KW-0227">DNA damage</keyword>
<keyword id="KW-0233">DNA recombination</keyword>
<keyword id="KW-0234">DNA repair</keyword>
<keyword id="KW-0238">DNA-binding</keyword>
<keyword id="KW-0547">Nucleotide-binding</keyword>
<keyword id="KW-1185">Reference proteome</keyword>
<keyword id="KW-0742">SOS response</keyword>
<organism>
    <name type="scientific">Rhodospirillum centenum (strain ATCC 51521 / SW)</name>
    <dbReference type="NCBI Taxonomy" id="414684"/>
    <lineage>
        <taxon>Bacteria</taxon>
        <taxon>Pseudomonadati</taxon>
        <taxon>Pseudomonadota</taxon>
        <taxon>Alphaproteobacteria</taxon>
        <taxon>Rhodospirillales</taxon>
        <taxon>Rhodospirillaceae</taxon>
        <taxon>Rhodospirillum</taxon>
    </lineage>
</organism>
<sequence length="358" mass="37698">MSAASLRLVDTPMDKQKALDAALGQIERAFGKGSIMKLGAREAMAETEAISTGSLGLDIALGIGGLPRGRIVEIYGPESSGKTTLALHAIAEAQKAGGTCAFVDAEHALDPAYARKLGVDVDELLISQPDAGEQALEIADTLVRSGAIDVLVVDSVAALVPRAELEGEMGDSHVGLHARLMSQALRKLTGSISKSRCLVIFINQIRLKIGVMFGNPETTTGGNALKFYASIRLDIRRIGAIKDRDNVVGNQTRVKVVKNKMAPPFRVVEFDIMYGEGVSKVGELLDLGIQAGVVEKSGAWFSYDGQRIGQGRENAKTFLRNNAAVAEAIEAKVRANAGLVASAMMGAPESDGDAASPD</sequence>
<reference key="1">
    <citation type="submission" date="2007-03" db="EMBL/GenBank/DDBJ databases">
        <title>Genome sequence of Rhodospirillum centenum.</title>
        <authorList>
            <person name="Touchman J.W."/>
            <person name="Bauer C."/>
            <person name="Blankenship R.E."/>
        </authorList>
    </citation>
    <scope>NUCLEOTIDE SEQUENCE [LARGE SCALE GENOMIC DNA]</scope>
    <source>
        <strain>ATCC 51521 / SW</strain>
    </source>
</reference>
<evidence type="ECO:0000255" key="1">
    <source>
        <dbReference type="HAMAP-Rule" id="MF_00268"/>
    </source>
</evidence>
<dbReference type="EMBL" id="CP000613">
    <property type="protein sequence ID" value="ACI98329.1"/>
    <property type="molecule type" value="Genomic_DNA"/>
</dbReference>
<dbReference type="RefSeq" id="WP_012566119.1">
    <property type="nucleotide sequence ID" value="NC_011420.2"/>
</dbReference>
<dbReference type="SMR" id="B6IS93"/>
<dbReference type="STRING" id="414684.RC1_0899"/>
<dbReference type="KEGG" id="rce:RC1_0899"/>
<dbReference type="eggNOG" id="COG0468">
    <property type="taxonomic scope" value="Bacteria"/>
</dbReference>
<dbReference type="HOGENOM" id="CLU_040469_1_2_5"/>
<dbReference type="OrthoDB" id="9776733at2"/>
<dbReference type="Proteomes" id="UP000001591">
    <property type="component" value="Chromosome"/>
</dbReference>
<dbReference type="GO" id="GO:0005829">
    <property type="term" value="C:cytosol"/>
    <property type="evidence" value="ECO:0007669"/>
    <property type="project" value="TreeGrafter"/>
</dbReference>
<dbReference type="GO" id="GO:0005524">
    <property type="term" value="F:ATP binding"/>
    <property type="evidence" value="ECO:0007669"/>
    <property type="project" value="UniProtKB-UniRule"/>
</dbReference>
<dbReference type="GO" id="GO:0016887">
    <property type="term" value="F:ATP hydrolysis activity"/>
    <property type="evidence" value="ECO:0007669"/>
    <property type="project" value="InterPro"/>
</dbReference>
<dbReference type="GO" id="GO:0140664">
    <property type="term" value="F:ATP-dependent DNA damage sensor activity"/>
    <property type="evidence" value="ECO:0007669"/>
    <property type="project" value="InterPro"/>
</dbReference>
<dbReference type="GO" id="GO:0003684">
    <property type="term" value="F:damaged DNA binding"/>
    <property type="evidence" value="ECO:0007669"/>
    <property type="project" value="UniProtKB-UniRule"/>
</dbReference>
<dbReference type="GO" id="GO:0003697">
    <property type="term" value="F:single-stranded DNA binding"/>
    <property type="evidence" value="ECO:0007669"/>
    <property type="project" value="UniProtKB-UniRule"/>
</dbReference>
<dbReference type="GO" id="GO:0006310">
    <property type="term" value="P:DNA recombination"/>
    <property type="evidence" value="ECO:0007669"/>
    <property type="project" value="UniProtKB-UniRule"/>
</dbReference>
<dbReference type="GO" id="GO:0006281">
    <property type="term" value="P:DNA repair"/>
    <property type="evidence" value="ECO:0007669"/>
    <property type="project" value="UniProtKB-UniRule"/>
</dbReference>
<dbReference type="GO" id="GO:0009432">
    <property type="term" value="P:SOS response"/>
    <property type="evidence" value="ECO:0007669"/>
    <property type="project" value="UniProtKB-UniRule"/>
</dbReference>
<dbReference type="CDD" id="cd00983">
    <property type="entry name" value="RecA"/>
    <property type="match status" value="1"/>
</dbReference>
<dbReference type="FunFam" id="3.40.50.300:FF:000087">
    <property type="entry name" value="Recombinase RecA"/>
    <property type="match status" value="1"/>
</dbReference>
<dbReference type="Gene3D" id="3.40.50.300">
    <property type="entry name" value="P-loop containing nucleotide triphosphate hydrolases"/>
    <property type="match status" value="1"/>
</dbReference>
<dbReference type="HAMAP" id="MF_00268">
    <property type="entry name" value="RecA"/>
    <property type="match status" value="1"/>
</dbReference>
<dbReference type="InterPro" id="IPR003593">
    <property type="entry name" value="AAA+_ATPase"/>
</dbReference>
<dbReference type="InterPro" id="IPR013765">
    <property type="entry name" value="DNA_recomb/repair_RecA"/>
</dbReference>
<dbReference type="InterPro" id="IPR020584">
    <property type="entry name" value="DNA_recomb/repair_RecA_CS"/>
</dbReference>
<dbReference type="InterPro" id="IPR027417">
    <property type="entry name" value="P-loop_NTPase"/>
</dbReference>
<dbReference type="InterPro" id="IPR049261">
    <property type="entry name" value="RecA-like_C"/>
</dbReference>
<dbReference type="InterPro" id="IPR049428">
    <property type="entry name" value="RecA-like_N"/>
</dbReference>
<dbReference type="InterPro" id="IPR020588">
    <property type="entry name" value="RecA_ATP-bd"/>
</dbReference>
<dbReference type="InterPro" id="IPR023400">
    <property type="entry name" value="RecA_C_sf"/>
</dbReference>
<dbReference type="InterPro" id="IPR020587">
    <property type="entry name" value="RecA_monomer-monomer_interface"/>
</dbReference>
<dbReference type="NCBIfam" id="TIGR02012">
    <property type="entry name" value="tigrfam_recA"/>
    <property type="match status" value="1"/>
</dbReference>
<dbReference type="PANTHER" id="PTHR45900:SF1">
    <property type="entry name" value="MITOCHONDRIAL DNA REPAIR PROTEIN RECA HOMOLOG-RELATED"/>
    <property type="match status" value="1"/>
</dbReference>
<dbReference type="PANTHER" id="PTHR45900">
    <property type="entry name" value="RECA"/>
    <property type="match status" value="1"/>
</dbReference>
<dbReference type="Pfam" id="PF00154">
    <property type="entry name" value="RecA"/>
    <property type="match status" value="1"/>
</dbReference>
<dbReference type="Pfam" id="PF21096">
    <property type="entry name" value="RecA_C"/>
    <property type="match status" value="1"/>
</dbReference>
<dbReference type="PRINTS" id="PR00142">
    <property type="entry name" value="RECA"/>
</dbReference>
<dbReference type="SMART" id="SM00382">
    <property type="entry name" value="AAA"/>
    <property type="match status" value="1"/>
</dbReference>
<dbReference type="SUPFAM" id="SSF52540">
    <property type="entry name" value="P-loop containing nucleoside triphosphate hydrolases"/>
    <property type="match status" value="1"/>
</dbReference>
<dbReference type="SUPFAM" id="SSF54752">
    <property type="entry name" value="RecA protein, C-terminal domain"/>
    <property type="match status" value="1"/>
</dbReference>
<dbReference type="PROSITE" id="PS00321">
    <property type="entry name" value="RECA_1"/>
    <property type="match status" value="1"/>
</dbReference>
<dbReference type="PROSITE" id="PS50162">
    <property type="entry name" value="RECA_2"/>
    <property type="match status" value="1"/>
</dbReference>
<dbReference type="PROSITE" id="PS50163">
    <property type="entry name" value="RECA_3"/>
    <property type="match status" value="1"/>
</dbReference>
<comment type="function">
    <text evidence="1">Can catalyze the hydrolysis of ATP in the presence of single-stranded DNA, the ATP-dependent uptake of single-stranded DNA by duplex DNA, and the ATP-dependent hybridization of homologous single-stranded DNAs. It interacts with LexA causing its activation and leading to its autocatalytic cleavage.</text>
</comment>
<comment type="subcellular location">
    <subcellularLocation>
        <location evidence="1">Cytoplasm</location>
    </subcellularLocation>
</comment>
<comment type="similarity">
    <text evidence="1">Belongs to the RecA family.</text>
</comment>
<proteinExistence type="inferred from homology"/>